<accession>Q28I03</accession>
<keyword id="KW-0963">Cytoplasm</keyword>
<keyword id="KW-0539">Nucleus</keyword>
<keyword id="KW-1185">Reference proteome</keyword>
<keyword id="KW-0690">Ribosome biogenesis</keyword>
<feature type="chain" id="PRO_0000274385" description="AFG2-interacting ribosome maturation factor">
    <location>
        <begin position="1"/>
        <end position="204"/>
    </location>
</feature>
<proteinExistence type="evidence at transcript level"/>
<organism>
    <name type="scientific">Xenopus tropicalis</name>
    <name type="common">Western clawed frog</name>
    <name type="synonym">Silurana tropicalis</name>
    <dbReference type="NCBI Taxonomy" id="8364"/>
    <lineage>
        <taxon>Eukaryota</taxon>
        <taxon>Metazoa</taxon>
        <taxon>Chordata</taxon>
        <taxon>Craniata</taxon>
        <taxon>Vertebrata</taxon>
        <taxon>Euteleostomi</taxon>
        <taxon>Amphibia</taxon>
        <taxon>Batrachia</taxon>
        <taxon>Anura</taxon>
        <taxon>Pipoidea</taxon>
        <taxon>Pipidae</taxon>
        <taxon>Xenopodinae</taxon>
        <taxon>Xenopus</taxon>
        <taxon>Silurana</taxon>
    </lineage>
</organism>
<dbReference type="EMBL" id="CR760660">
    <property type="protein sequence ID" value="CAJ82165.1"/>
    <property type="molecule type" value="mRNA"/>
</dbReference>
<dbReference type="RefSeq" id="NP_001037904.1">
    <property type="nucleotide sequence ID" value="NM_001044439.1"/>
</dbReference>
<dbReference type="SMR" id="Q28I03"/>
<dbReference type="FunCoup" id="Q28I03">
    <property type="interactions" value="3513"/>
</dbReference>
<dbReference type="STRING" id="8364.ENSXETP00000052419"/>
<dbReference type="PaxDb" id="8364-ENSXETP00000037954"/>
<dbReference type="GeneID" id="733509"/>
<dbReference type="KEGG" id="xtr:733509"/>
<dbReference type="AGR" id="Xenbase:XB-GENE-5846660"/>
<dbReference type="CTD" id="54955"/>
<dbReference type="Xenbase" id="XB-GENE-5846660">
    <property type="gene designation" value="airim"/>
</dbReference>
<dbReference type="eggNOG" id="ENOG502S0VU">
    <property type="taxonomic scope" value="Eukaryota"/>
</dbReference>
<dbReference type="InParanoid" id="Q28I03"/>
<dbReference type="OrthoDB" id="6605214at2759"/>
<dbReference type="Proteomes" id="UP000008143">
    <property type="component" value="Chromosome 2"/>
</dbReference>
<dbReference type="GO" id="GO:0005737">
    <property type="term" value="C:cytoplasm"/>
    <property type="evidence" value="ECO:0000250"/>
    <property type="project" value="UniProtKB"/>
</dbReference>
<dbReference type="GO" id="GO:0005634">
    <property type="term" value="C:nucleus"/>
    <property type="evidence" value="ECO:0000250"/>
    <property type="project" value="UniProtKB"/>
</dbReference>
<dbReference type="GO" id="GO:0042273">
    <property type="term" value="P:ribosomal large subunit biogenesis"/>
    <property type="evidence" value="ECO:0000250"/>
    <property type="project" value="UniProtKB"/>
</dbReference>
<dbReference type="InterPro" id="IPR029159">
    <property type="entry name" value="CA109-like"/>
</dbReference>
<dbReference type="PANTHER" id="PTHR16234:SF5">
    <property type="entry name" value="AFG2-INTERACTING RIBOSOME MATURATION FACTOR"/>
    <property type="match status" value="1"/>
</dbReference>
<dbReference type="PANTHER" id="PTHR16234">
    <property type="entry name" value="SIMILAR TO HYPOTHETICAL PROTEIN FLJ20508"/>
    <property type="match status" value="1"/>
</dbReference>
<dbReference type="Pfam" id="PF15011">
    <property type="entry name" value="CA109-like"/>
    <property type="match status" value="1"/>
</dbReference>
<reference key="1">
    <citation type="submission" date="2006-10" db="EMBL/GenBank/DDBJ databases">
        <authorList>
            <consortium name="Sanger Xenopus tropicalis EST/cDNA project"/>
        </authorList>
    </citation>
    <scope>NUCLEOTIDE SEQUENCE [LARGE SCALE MRNA]</scope>
    <source>
        <tissue>Egg</tissue>
    </source>
</reference>
<evidence type="ECO:0000250" key="1">
    <source>
        <dbReference type="UniProtKB" id="Q9NX04"/>
    </source>
</evidence>
<evidence type="ECO:0000305" key="2"/>
<name>AIRIM_XENTR</name>
<protein>
    <recommendedName>
        <fullName evidence="1">AFG2-interacting ribosome maturation factor</fullName>
    </recommendedName>
    <alternativeName>
        <fullName evidence="2">Ribosome biogenesis protein C1orf109 homolog</fullName>
    </alternativeName>
</protein>
<sequence>MSEKPAFVSVQQSLRKSFDAIEPLHEEWNNTLLECNPHLTSLSNLAEQLQACQRVLFKKTPLSSFINLQEHLRFKLQAAMEFNLEILNQKLSTLQRIRDSVSQVVGSVLYMYETSIEKIGLEAILERSSLCPSIADMLEWLQDIEKHYRNQYLQRKLLLQVCGGHLSDIQALPQSWAKQRDAASSKQQHVEDILLSVSFFRMST</sequence>
<gene>
    <name type="primary">airim</name>
    <name type="synonym">c2h1orf109</name>
    <name type="ORF">TEgg082i12.1</name>
</gene>
<comment type="function">
    <text evidence="1">Part of the 55LCC heterohexameric ATPase complex which is chromatin-associated and promotes replisome proteostasis to maintain replication fork progression and genome stability. Required for replication fork progression, sister chromatid cohesion, and chromosome stability. The ATPase activity is specifically enhanced by replication fork DNA and is coupled to cysteine protease-dependent cleavage of replisome substrates in response to replication fork damage. Uses ATPase activity to process replisome substrates in S-phase, facilitating their proteolytic turnover from chromatin to ensure DNA replication and mitotic fidelity. Involved in the cytoplasmic maturation steps of pre-60S ribosomal particles by promoting the release of shuttling protein RSL24D1/RLP24 from the pre-ribosomal particles.</text>
</comment>
<comment type="subunit">
    <text evidence="1">Part of the 55LCC heterohexameric ATPase complex. Does not associate with pre-60S ribosomal particles.</text>
</comment>
<comment type="subcellular location">
    <subcellularLocation>
        <location evidence="1">Nucleus</location>
    </subcellularLocation>
    <subcellularLocation>
        <location evidence="1">Cytoplasm</location>
    </subcellularLocation>
</comment>